<evidence type="ECO:0000255" key="1">
    <source>
        <dbReference type="HAMAP-Rule" id="MF_01844"/>
    </source>
</evidence>
<protein>
    <recommendedName>
        <fullName evidence="1">Na(+)/H(+) antiporter NhaA 1/4</fullName>
    </recommendedName>
    <alternativeName>
        <fullName evidence="1">Sodium/proton antiporter NhaA 1</fullName>
    </alternativeName>
</protein>
<comment type="function">
    <text evidence="1">Na(+)/H(+) antiporter that extrudes sodium in exchange for external protons.</text>
</comment>
<comment type="catalytic activity">
    <reaction evidence="1">
        <text>Na(+)(in) + 2 H(+)(out) = Na(+)(out) + 2 H(+)(in)</text>
        <dbReference type="Rhea" id="RHEA:29251"/>
        <dbReference type="ChEBI" id="CHEBI:15378"/>
        <dbReference type="ChEBI" id="CHEBI:29101"/>
    </reaction>
    <physiologicalReaction direction="left-to-right" evidence="1">
        <dbReference type="Rhea" id="RHEA:29252"/>
    </physiologicalReaction>
</comment>
<comment type="subcellular location">
    <subcellularLocation>
        <location evidence="1">Cell membrane</location>
        <topology evidence="1">Multi-pass membrane protein</topology>
    </subcellularLocation>
</comment>
<comment type="similarity">
    <text evidence="1">Belongs to the NhaA Na(+)/H(+) (TC 2.A.33) antiporter family.</text>
</comment>
<accession>Q9S1X8</accession>
<gene>
    <name evidence="1" type="primary">nhaA1</name>
    <name type="ordered locus">SCO0015</name>
    <name type="ORF">SCJ30.11c</name>
</gene>
<gene>
    <name evidence="1" type="primary">nhaA4</name>
    <name type="ordered locus">SCO7832</name>
    <name type="ORF">SC8E7.29</name>
</gene>
<proteinExistence type="inferred from homology"/>
<feature type="chain" id="PRO_0000334447" description="Na(+)/H(+) antiporter NhaA 1/4">
    <location>
        <begin position="1"/>
        <end position="410"/>
    </location>
</feature>
<feature type="transmembrane region" description="Helical" evidence="1">
    <location>
        <begin position="16"/>
        <end position="36"/>
    </location>
</feature>
<feature type="transmembrane region" description="Helical" evidence="1">
    <location>
        <begin position="55"/>
        <end position="75"/>
    </location>
</feature>
<feature type="transmembrane region" description="Helical" evidence="1">
    <location>
        <begin position="95"/>
        <end position="115"/>
    </location>
</feature>
<feature type="transmembrane region" description="Helical" evidence="1">
    <location>
        <begin position="125"/>
        <end position="145"/>
    </location>
</feature>
<feature type="transmembrane region" description="Helical" evidence="1">
    <location>
        <begin position="156"/>
        <end position="176"/>
    </location>
</feature>
<feature type="transmembrane region" description="Helical" evidence="1">
    <location>
        <begin position="178"/>
        <end position="198"/>
    </location>
</feature>
<feature type="transmembrane region" description="Helical" evidence="1">
    <location>
        <begin position="215"/>
        <end position="235"/>
    </location>
</feature>
<feature type="transmembrane region" description="Helical" evidence="1">
    <location>
        <begin position="275"/>
        <end position="295"/>
    </location>
</feature>
<feature type="transmembrane region" description="Helical" evidence="1">
    <location>
        <begin position="299"/>
        <end position="319"/>
    </location>
</feature>
<feature type="transmembrane region" description="Helical" evidence="1">
    <location>
        <begin position="340"/>
        <end position="360"/>
    </location>
</feature>
<feature type="transmembrane region" description="Helical" evidence="1">
    <location>
        <begin position="371"/>
        <end position="391"/>
    </location>
</feature>
<sequence>MSAPSRITAALRSDAVGGSLLIGAAVIALIWANSPLSHSYEALRSFTFGPSALHLNLSVETWAADGLLAVFFFIVGNELKQELVHGELRDPRRAALPIAAALGGVAVPALVFLAFTLGSGGEAAGGWGIPMATGIAFAVAVLAVVGRHLPTPLRTFLLTLATVDDMSAVLVIAVACTSGINFTALALAAVGLAVFGYLQNGSGRAVARVRAMVPAWLLFVPLAAVVWALMHACGVHATIAGVVMGLLMRTRPQGAERVSPSHRAEEVLRPFSAGIALPLFALMSAGVSLAGAGGFVTSAITWNVLAGLLVGKVVGIFGGTWPTSRLTSAHLNPLLGWADIAGIAVLGGIGFTVSLPIAELSSTSQAHLTDAKGAILLASTTAALLAALLLGRRSRHHQRLARQAAQQATT</sequence>
<keyword id="KW-0050">Antiport</keyword>
<keyword id="KW-1003">Cell membrane</keyword>
<keyword id="KW-0406">Ion transport</keyword>
<keyword id="KW-0472">Membrane</keyword>
<keyword id="KW-1185">Reference proteome</keyword>
<keyword id="KW-0915">Sodium</keyword>
<keyword id="KW-0739">Sodium transport</keyword>
<keyword id="KW-0812">Transmembrane</keyword>
<keyword id="KW-1133">Transmembrane helix</keyword>
<keyword id="KW-0813">Transport</keyword>
<reference key="1">
    <citation type="journal article" date="2002" name="Nature">
        <title>Complete genome sequence of the model actinomycete Streptomyces coelicolor A3(2).</title>
        <authorList>
            <person name="Bentley S.D."/>
            <person name="Chater K.F."/>
            <person name="Cerdeno-Tarraga A.-M."/>
            <person name="Challis G.L."/>
            <person name="Thomson N.R."/>
            <person name="James K.D."/>
            <person name="Harris D.E."/>
            <person name="Quail M.A."/>
            <person name="Kieser H."/>
            <person name="Harper D."/>
            <person name="Bateman A."/>
            <person name="Brown S."/>
            <person name="Chandra G."/>
            <person name="Chen C.W."/>
            <person name="Collins M."/>
            <person name="Cronin A."/>
            <person name="Fraser A."/>
            <person name="Goble A."/>
            <person name="Hidalgo J."/>
            <person name="Hornsby T."/>
            <person name="Howarth S."/>
            <person name="Huang C.-H."/>
            <person name="Kieser T."/>
            <person name="Larke L."/>
            <person name="Murphy L.D."/>
            <person name="Oliver K."/>
            <person name="O'Neil S."/>
            <person name="Rabbinowitsch E."/>
            <person name="Rajandream M.A."/>
            <person name="Rutherford K.M."/>
            <person name="Rutter S."/>
            <person name="Seeger K."/>
            <person name="Saunders D."/>
            <person name="Sharp S."/>
            <person name="Squares R."/>
            <person name="Squares S."/>
            <person name="Taylor K."/>
            <person name="Warren T."/>
            <person name="Wietzorrek A."/>
            <person name="Woodward J.R."/>
            <person name="Barrell B.G."/>
            <person name="Parkhill J."/>
            <person name="Hopwood D.A."/>
        </authorList>
    </citation>
    <scope>NUCLEOTIDE SEQUENCE [LARGE SCALE GENOMIC DNA]</scope>
    <source>
        <strain>ATCC BAA-471 / A3(2) / M145</strain>
    </source>
</reference>
<name>NHAA1_STRCO</name>
<dbReference type="EMBL" id="AL939104">
    <property type="protein sequence ID" value="CAB53306.1"/>
    <property type="molecule type" value="Genomic_DNA"/>
</dbReference>
<dbReference type="EMBL" id="AL939132">
    <property type="protein sequence ID" value="CAC03650.1"/>
    <property type="molecule type" value="Genomic_DNA"/>
</dbReference>
<dbReference type="PIR" id="T37078">
    <property type="entry name" value="T37078"/>
</dbReference>
<dbReference type="RefSeq" id="NP_624376.1">
    <property type="nucleotide sequence ID" value="NC_003888.3"/>
</dbReference>
<dbReference type="RefSeq" id="NP_631860.1">
    <property type="nucleotide sequence ID" value="NC_003888.3"/>
</dbReference>
<dbReference type="SMR" id="Q9S1X8"/>
<dbReference type="STRING" id="100226.gene:17757610"/>
<dbReference type="TCDB" id="2.A.33.1.6">
    <property type="family name" value="the nhaa na(+):h(+) antiporter (nhaa) family"/>
</dbReference>
<dbReference type="PaxDb" id="100226-SCO0015"/>
<dbReference type="KEGG" id="sco:SCO0015"/>
<dbReference type="KEGG" id="sco:SCO7832"/>
<dbReference type="PATRIC" id="fig|100226.15.peg.14"/>
<dbReference type="eggNOG" id="COG3004">
    <property type="taxonomic scope" value="Bacteria"/>
</dbReference>
<dbReference type="HOGENOM" id="CLU_015803_0_0_11"/>
<dbReference type="InParanoid" id="Q9S1X8"/>
<dbReference type="OrthoDB" id="117402at2"/>
<dbReference type="PhylomeDB" id="Q9S1X8"/>
<dbReference type="Proteomes" id="UP000001973">
    <property type="component" value="Chromosome"/>
</dbReference>
<dbReference type="GO" id="GO:0005886">
    <property type="term" value="C:plasma membrane"/>
    <property type="evidence" value="ECO:0000318"/>
    <property type="project" value="GO_Central"/>
</dbReference>
<dbReference type="GO" id="GO:0015385">
    <property type="term" value="F:sodium:proton antiporter activity"/>
    <property type="evidence" value="ECO:0000318"/>
    <property type="project" value="GO_Central"/>
</dbReference>
<dbReference type="GO" id="GO:0006885">
    <property type="term" value="P:regulation of pH"/>
    <property type="evidence" value="ECO:0007669"/>
    <property type="project" value="InterPro"/>
</dbReference>
<dbReference type="Gene3D" id="1.20.1530.10">
    <property type="entry name" value="Na+/H+ antiporter like domain"/>
    <property type="match status" value="1"/>
</dbReference>
<dbReference type="HAMAP" id="MF_01844">
    <property type="entry name" value="NhaA"/>
    <property type="match status" value="1"/>
</dbReference>
<dbReference type="InterPro" id="IPR023171">
    <property type="entry name" value="Na/H_antiporter_dom_sf"/>
</dbReference>
<dbReference type="InterPro" id="IPR004670">
    <property type="entry name" value="NhaA"/>
</dbReference>
<dbReference type="NCBIfam" id="TIGR00773">
    <property type="entry name" value="NhaA"/>
    <property type="match status" value="1"/>
</dbReference>
<dbReference type="PANTHER" id="PTHR30341:SF0">
    <property type="entry name" value="NA(+)_H(+) ANTIPORTER NHAA"/>
    <property type="match status" value="1"/>
</dbReference>
<dbReference type="PANTHER" id="PTHR30341">
    <property type="entry name" value="SODIUM ION/PROTON ANTIPORTER NHAA-RELATED"/>
    <property type="match status" value="1"/>
</dbReference>
<dbReference type="Pfam" id="PF06965">
    <property type="entry name" value="Na_H_antiport_1"/>
    <property type="match status" value="1"/>
</dbReference>
<organism>
    <name type="scientific">Streptomyces coelicolor (strain ATCC BAA-471 / A3(2) / M145)</name>
    <dbReference type="NCBI Taxonomy" id="100226"/>
    <lineage>
        <taxon>Bacteria</taxon>
        <taxon>Bacillati</taxon>
        <taxon>Actinomycetota</taxon>
        <taxon>Actinomycetes</taxon>
        <taxon>Kitasatosporales</taxon>
        <taxon>Streptomycetaceae</taxon>
        <taxon>Streptomyces</taxon>
        <taxon>Streptomyces albidoflavus group</taxon>
    </lineage>
</organism>